<evidence type="ECO:0000255" key="1">
    <source>
        <dbReference type="HAMAP-Rule" id="MF_00185"/>
    </source>
</evidence>
<organism>
    <name type="scientific">Streptococcus pyogenes serotype M4 (strain MGAS10750)</name>
    <dbReference type="NCBI Taxonomy" id="370554"/>
    <lineage>
        <taxon>Bacteria</taxon>
        <taxon>Bacillati</taxon>
        <taxon>Bacillota</taxon>
        <taxon>Bacilli</taxon>
        <taxon>Lactobacillales</taxon>
        <taxon>Streptococcaceae</taxon>
        <taxon>Streptococcus</taxon>
    </lineage>
</organism>
<feature type="chain" id="PRO_1000020671" description="tRNA dimethylallyltransferase">
    <location>
        <begin position="1"/>
        <end position="299"/>
    </location>
</feature>
<feature type="region of interest" description="Interaction with substrate tRNA" evidence="1">
    <location>
        <begin position="36"/>
        <end position="39"/>
    </location>
</feature>
<feature type="binding site" evidence="1">
    <location>
        <begin position="11"/>
        <end position="18"/>
    </location>
    <ligand>
        <name>ATP</name>
        <dbReference type="ChEBI" id="CHEBI:30616"/>
    </ligand>
</feature>
<feature type="binding site" evidence="1">
    <location>
        <begin position="13"/>
        <end position="18"/>
    </location>
    <ligand>
        <name>substrate</name>
    </ligand>
</feature>
<feature type="site" description="Interaction with substrate tRNA" evidence="1">
    <location>
        <position position="102"/>
    </location>
</feature>
<protein>
    <recommendedName>
        <fullName evidence="1">tRNA dimethylallyltransferase</fullName>
        <ecNumber evidence="1">2.5.1.75</ecNumber>
    </recommendedName>
    <alternativeName>
        <fullName evidence="1">Dimethylallyl diphosphate:tRNA dimethylallyltransferase</fullName>
        <shortName evidence="1">DMAPP:tRNA dimethylallyltransferase</shortName>
        <shortName evidence="1">DMATase</shortName>
    </alternativeName>
    <alternativeName>
        <fullName evidence="1">Isopentenyl-diphosphate:tRNA isopentenyltransferase</fullName>
        <shortName evidence="1">IPP transferase</shortName>
        <shortName evidence="1">IPPT</shortName>
        <shortName evidence="1">IPTase</shortName>
    </alternativeName>
</protein>
<proteinExistence type="inferred from homology"/>
<sequence length="299" mass="33827">MTKIKIVVIVGPTAVGKTALGISLAKAFNGEIISGDSQQVYRQLDVGTAKATQEEQAAAVHHLIDIREVTESYSAYEFVQDAQKAISDIVSRGKLPIIVGGTGLYLQSLLEGYHLGGQVDQEAVKAYRQELDQLSDQEVYELLQVKSITIKQLNRRRAIRALELSQFADDLENAETAYEPLIIGLNDDRQVIYDRINQRVDRMLENGLLEEAKWLYEHYPTVQASRGIGYKELFPYFVGEMTLAEASDQLKQNTRRFAKRQLTWFRNRMAVGFTAITAPDYPQVVHDRVRDFLGQKEKS</sequence>
<accession>Q1J708</accession>
<keyword id="KW-0067">ATP-binding</keyword>
<keyword id="KW-0460">Magnesium</keyword>
<keyword id="KW-0547">Nucleotide-binding</keyword>
<keyword id="KW-0808">Transferase</keyword>
<keyword id="KW-0819">tRNA processing</keyword>
<name>MIAA_STRPF</name>
<reference key="1">
    <citation type="journal article" date="2006" name="Proc. Natl. Acad. Sci. U.S.A.">
        <title>Molecular genetic anatomy of inter- and intraserotype variation in the human bacterial pathogen group A Streptococcus.</title>
        <authorList>
            <person name="Beres S.B."/>
            <person name="Richter E.W."/>
            <person name="Nagiec M.J."/>
            <person name="Sumby P."/>
            <person name="Porcella S.F."/>
            <person name="DeLeo F.R."/>
            <person name="Musser J.M."/>
        </authorList>
    </citation>
    <scope>NUCLEOTIDE SEQUENCE [LARGE SCALE GENOMIC DNA]</scope>
    <source>
        <strain>MGAS10750</strain>
    </source>
</reference>
<dbReference type="EC" id="2.5.1.75" evidence="1"/>
<dbReference type="EMBL" id="CP000262">
    <property type="protein sequence ID" value="ABF37766.1"/>
    <property type="molecule type" value="Genomic_DNA"/>
</dbReference>
<dbReference type="SMR" id="Q1J708"/>
<dbReference type="KEGG" id="spi:MGAS10750_Spy0816"/>
<dbReference type="HOGENOM" id="CLU_032616_0_1_9"/>
<dbReference type="Proteomes" id="UP000002434">
    <property type="component" value="Chromosome"/>
</dbReference>
<dbReference type="GO" id="GO:0005524">
    <property type="term" value="F:ATP binding"/>
    <property type="evidence" value="ECO:0007669"/>
    <property type="project" value="UniProtKB-UniRule"/>
</dbReference>
<dbReference type="GO" id="GO:0052381">
    <property type="term" value="F:tRNA dimethylallyltransferase activity"/>
    <property type="evidence" value="ECO:0007669"/>
    <property type="project" value="UniProtKB-UniRule"/>
</dbReference>
<dbReference type="GO" id="GO:0006400">
    <property type="term" value="P:tRNA modification"/>
    <property type="evidence" value="ECO:0007669"/>
    <property type="project" value="TreeGrafter"/>
</dbReference>
<dbReference type="Gene3D" id="3.40.50.300">
    <property type="entry name" value="P-loop containing nucleotide triphosphate hydrolases"/>
    <property type="match status" value="1"/>
</dbReference>
<dbReference type="HAMAP" id="MF_00185">
    <property type="entry name" value="IPP_trans"/>
    <property type="match status" value="1"/>
</dbReference>
<dbReference type="InterPro" id="IPR039657">
    <property type="entry name" value="Dimethylallyltransferase"/>
</dbReference>
<dbReference type="InterPro" id="IPR018022">
    <property type="entry name" value="IPT"/>
</dbReference>
<dbReference type="InterPro" id="IPR027417">
    <property type="entry name" value="P-loop_NTPase"/>
</dbReference>
<dbReference type="NCBIfam" id="TIGR00174">
    <property type="entry name" value="miaA"/>
    <property type="match status" value="1"/>
</dbReference>
<dbReference type="PANTHER" id="PTHR11088">
    <property type="entry name" value="TRNA DIMETHYLALLYLTRANSFERASE"/>
    <property type="match status" value="1"/>
</dbReference>
<dbReference type="PANTHER" id="PTHR11088:SF60">
    <property type="entry name" value="TRNA DIMETHYLALLYLTRANSFERASE"/>
    <property type="match status" value="1"/>
</dbReference>
<dbReference type="Pfam" id="PF01715">
    <property type="entry name" value="IPPT"/>
    <property type="match status" value="1"/>
</dbReference>
<dbReference type="SUPFAM" id="SSF52540">
    <property type="entry name" value="P-loop containing nucleoside triphosphate hydrolases"/>
    <property type="match status" value="1"/>
</dbReference>
<gene>
    <name evidence="1" type="primary">miaA</name>
    <name type="ordered locus">MGAS10750_Spy0816</name>
</gene>
<comment type="function">
    <text evidence="1">Catalyzes the transfer of a dimethylallyl group onto the adenine at position 37 in tRNAs that read codons beginning with uridine, leading to the formation of N6-(dimethylallyl)adenosine (i(6)A).</text>
</comment>
<comment type="catalytic activity">
    <reaction evidence="1">
        <text>adenosine(37) in tRNA + dimethylallyl diphosphate = N(6)-dimethylallyladenosine(37) in tRNA + diphosphate</text>
        <dbReference type="Rhea" id="RHEA:26482"/>
        <dbReference type="Rhea" id="RHEA-COMP:10162"/>
        <dbReference type="Rhea" id="RHEA-COMP:10375"/>
        <dbReference type="ChEBI" id="CHEBI:33019"/>
        <dbReference type="ChEBI" id="CHEBI:57623"/>
        <dbReference type="ChEBI" id="CHEBI:74411"/>
        <dbReference type="ChEBI" id="CHEBI:74415"/>
        <dbReference type="EC" id="2.5.1.75"/>
    </reaction>
</comment>
<comment type="cofactor">
    <cofactor evidence="1">
        <name>Mg(2+)</name>
        <dbReference type="ChEBI" id="CHEBI:18420"/>
    </cofactor>
</comment>
<comment type="subunit">
    <text evidence="1">Monomer.</text>
</comment>
<comment type="similarity">
    <text evidence="1">Belongs to the IPP transferase family.</text>
</comment>